<name>VMS1_SCHPO</name>
<feature type="chain" id="PRO_0000310323" description="tRNA endonuclease vms1">
    <location>
        <begin position="1"/>
        <end position="600"/>
    </location>
</feature>
<feature type="domain" description="VLRF1" evidence="3">
    <location>
        <begin position="197"/>
        <end position="348"/>
    </location>
</feature>
<feature type="repeat" description="ANK 1">
    <location>
        <begin position="432"/>
        <end position="461"/>
    </location>
</feature>
<feature type="repeat" description="ANK 2">
    <location>
        <begin position="465"/>
        <end position="492"/>
    </location>
</feature>
<feature type="region of interest" description="Disordered" evidence="4">
    <location>
        <begin position="239"/>
        <end position="263"/>
    </location>
</feature>
<feature type="region of interest" description="Disordered" evidence="4">
    <location>
        <begin position="517"/>
        <end position="563"/>
    </location>
</feature>
<feature type="coiled-coil region" evidence="2">
    <location>
        <begin position="359"/>
        <end position="392"/>
    </location>
</feature>
<feature type="coiled-coil region" evidence="2">
    <location>
        <begin position="506"/>
        <end position="550"/>
    </location>
</feature>
<feature type="compositionally biased region" description="Basic and acidic residues" evidence="4">
    <location>
        <begin position="520"/>
        <end position="559"/>
    </location>
</feature>
<feature type="active site" evidence="3">
    <location>
        <position position="249"/>
    </location>
</feature>
<feature type="modified residue" description="Phosphoserine" evidence="6">
    <location>
        <position position="38"/>
    </location>
</feature>
<proteinExistence type="evidence at protein level"/>
<sequence length="600" mass="68793">MGDISKHNIFSLPEDILAKLELREEYSVEEKTDSANLSNQGDIVDSTQKNISSCVNCQIDNLHTLDERKSHIKSDWHRFNTKRKITKLPPVSQDEFESIIEDLPESLSGSESETNSESEEDNFQIEKAFKQSLNIGKVDSADENNNQRTNSPLTWFQLSNASAEVPTYIGVYKHMFSGNNHITKDLLVQQQNHNRQKPLQLAMFMVGGGHFAAMIASNEFNPRDPHVPKVLAQKTIHRYTTRRKQGGSQGAADNTKGNIHSAGSGLRRYNEQALIKDIQQVFKDWGKLLETCDLIFVRAIGSSNRSIFFSQPGALISPKDPKLRVFPFTTKRATHSELLRCYKELVTPKISHVDSISIKAQEEERKRQAEIEKEIRQSRLQEEERKKKKLAKYTEVIISNLKASNIEAFLEYLRSNDLSINFQFYPKNVHLHTSTPLHYAVTQKNAKLVAKLLRNGADPAMLNGNGKTPFEISTGNKEVKDEFLIARHELGESFFDWEAAKVGAPQSREQIQKQRQKAKTKLENQRRDKERQEELRRKEAMQKIEEQSKRDYDKLHGEGHSLGINNVRKVDELQSLSPEMRMRIEREKRAAAAMKRMQTK</sequence>
<accession>O74977</accession>
<organism>
    <name type="scientific">Schizosaccharomyces pombe (strain 972 / ATCC 24843)</name>
    <name type="common">Fission yeast</name>
    <dbReference type="NCBI Taxonomy" id="284812"/>
    <lineage>
        <taxon>Eukaryota</taxon>
        <taxon>Fungi</taxon>
        <taxon>Dikarya</taxon>
        <taxon>Ascomycota</taxon>
        <taxon>Taphrinomycotina</taxon>
        <taxon>Schizosaccharomycetes</taxon>
        <taxon>Schizosaccharomycetales</taxon>
        <taxon>Schizosaccharomycetaceae</taxon>
        <taxon>Schizosaccharomyces</taxon>
    </lineage>
</organism>
<dbReference type="EC" id="3.1.-.-" evidence="1"/>
<dbReference type="EMBL" id="CU329672">
    <property type="protein sequence ID" value="CAA19312.1"/>
    <property type="molecule type" value="Genomic_DNA"/>
</dbReference>
<dbReference type="PIR" id="T41165">
    <property type="entry name" value="T41165"/>
</dbReference>
<dbReference type="RefSeq" id="NP_588550.1">
    <property type="nucleotide sequence ID" value="NM_001023537.2"/>
</dbReference>
<dbReference type="SMR" id="O74977"/>
<dbReference type="BioGRID" id="275759">
    <property type="interactions" value="27"/>
</dbReference>
<dbReference type="FunCoup" id="O74977">
    <property type="interactions" value="32"/>
</dbReference>
<dbReference type="STRING" id="284812.O74977"/>
<dbReference type="iPTMnet" id="O74977"/>
<dbReference type="PaxDb" id="4896-SPCC1827.04.1"/>
<dbReference type="EnsemblFungi" id="SPCC1827.04.1">
    <property type="protein sequence ID" value="SPCC1827.04.1:pep"/>
    <property type="gene ID" value="SPCC1827.04"/>
</dbReference>
<dbReference type="PomBase" id="SPCC1827.04">
    <property type="gene designation" value="vms1"/>
</dbReference>
<dbReference type="VEuPathDB" id="FungiDB:SPCC1827.04"/>
<dbReference type="eggNOG" id="KOG2505">
    <property type="taxonomic scope" value="Eukaryota"/>
</dbReference>
<dbReference type="HOGENOM" id="CLU_014293_1_1_1"/>
<dbReference type="InParanoid" id="O74977"/>
<dbReference type="OMA" id="AQKTIHR"/>
<dbReference type="PhylomeDB" id="O74977"/>
<dbReference type="PRO" id="PR:O74977"/>
<dbReference type="Proteomes" id="UP000002485">
    <property type="component" value="Chromosome III"/>
</dbReference>
<dbReference type="GO" id="GO:0036266">
    <property type="term" value="C:Cdc48p-Npl4p-Vms1p AAA ATPase complex"/>
    <property type="evidence" value="ECO:0000266"/>
    <property type="project" value="PomBase"/>
</dbReference>
<dbReference type="GO" id="GO:0032473">
    <property type="term" value="C:cytoplasmic side of mitochondrial outer membrane"/>
    <property type="evidence" value="ECO:0000305"/>
    <property type="project" value="PomBase"/>
</dbReference>
<dbReference type="GO" id="GO:0005829">
    <property type="term" value="C:cytosol"/>
    <property type="evidence" value="ECO:0007005"/>
    <property type="project" value="PomBase"/>
</dbReference>
<dbReference type="GO" id="GO:0005789">
    <property type="term" value="C:endoplasmic reticulum membrane"/>
    <property type="evidence" value="ECO:0000266"/>
    <property type="project" value="PomBase"/>
</dbReference>
<dbReference type="GO" id="GO:0004519">
    <property type="term" value="F:endonuclease activity"/>
    <property type="evidence" value="ECO:0007669"/>
    <property type="project" value="UniProtKB-KW"/>
</dbReference>
<dbReference type="GO" id="GO:0036503">
    <property type="term" value="P:ERAD pathway"/>
    <property type="evidence" value="ECO:0000318"/>
    <property type="project" value="GO_Central"/>
</dbReference>
<dbReference type="Gene3D" id="1.25.40.20">
    <property type="entry name" value="Ankyrin repeat-containing domain"/>
    <property type="match status" value="1"/>
</dbReference>
<dbReference type="InterPro" id="IPR002110">
    <property type="entry name" value="Ankyrin_rpt"/>
</dbReference>
<dbReference type="InterPro" id="IPR036770">
    <property type="entry name" value="Ankyrin_rpt-contain_sf"/>
</dbReference>
<dbReference type="InterPro" id="IPR047139">
    <property type="entry name" value="ANKZ1/VMS1"/>
</dbReference>
<dbReference type="InterPro" id="IPR041175">
    <property type="entry name" value="VLRF1/Vms1"/>
</dbReference>
<dbReference type="PANTHER" id="PTHR16036">
    <property type="entry name" value="ANKYRIN REPEAT AND ZINC FINGER DOMAIN-CONTAINING PROTEIN 1"/>
    <property type="match status" value="1"/>
</dbReference>
<dbReference type="PANTHER" id="PTHR16036:SF2">
    <property type="entry name" value="TRNA ENDONUCLEASE ANKZF1"/>
    <property type="match status" value="1"/>
</dbReference>
<dbReference type="Pfam" id="PF13857">
    <property type="entry name" value="Ank_5"/>
    <property type="match status" value="1"/>
</dbReference>
<dbReference type="Pfam" id="PF18826">
    <property type="entry name" value="bVLRF1"/>
    <property type="match status" value="1"/>
</dbReference>
<dbReference type="SMART" id="SM00248">
    <property type="entry name" value="ANK"/>
    <property type="match status" value="1"/>
</dbReference>
<dbReference type="SUPFAM" id="SSF48403">
    <property type="entry name" value="Ankyrin repeat"/>
    <property type="match status" value="1"/>
</dbReference>
<dbReference type="PROSITE" id="PS50297">
    <property type="entry name" value="ANK_REP_REGION"/>
    <property type="match status" value="1"/>
</dbReference>
<dbReference type="PROSITE" id="PS50088">
    <property type="entry name" value="ANK_REPEAT"/>
    <property type="match status" value="1"/>
</dbReference>
<dbReference type="PROSITE" id="PS52044">
    <property type="entry name" value="VLRF1"/>
    <property type="match status" value="1"/>
</dbReference>
<evidence type="ECO:0000250" key="1">
    <source>
        <dbReference type="UniProtKB" id="Q04311"/>
    </source>
</evidence>
<evidence type="ECO:0000255" key="2"/>
<evidence type="ECO:0000255" key="3">
    <source>
        <dbReference type="PROSITE-ProRule" id="PRU01389"/>
    </source>
</evidence>
<evidence type="ECO:0000256" key="4">
    <source>
        <dbReference type="SAM" id="MobiDB-lite"/>
    </source>
</evidence>
<evidence type="ECO:0000269" key="5">
    <source>
    </source>
</evidence>
<evidence type="ECO:0000269" key="6">
    <source>
    </source>
</evidence>
<evidence type="ECO:0000305" key="7"/>
<comment type="function">
    <text evidence="1">Endonuclease that cleaves polypeptidyl-tRNAs downstream of the ribosome-associated quality control (RQC) pathway to release incompletely synthesized polypeptides for degradation. The RQC pathway disassembles aberrantly stalled translation complexes to recycle or degrade the constituent parts. Vms1 acts downstream disassembly of stalled ribosomes and specifically cleaves off the terminal 3'-CCA nucleotides universal to all tRNAs from polypeptidyl-tRNAs, releasing (1) ubiquitinated polypeptides from 60S ribosomal subunit for degradation by the ERAD pathway and (2) cleaved tRNAs for recycling. Component of an evolutionarily conserved system for ubiquitin-mediated mitochondria-associated protein degradation (MAD), which is necessary to maintain mitochondrial, cellular, and organismal viability.</text>
</comment>
<comment type="subcellular location">
    <subcellularLocation>
        <location evidence="5">Cytoplasm</location>
    </subcellularLocation>
    <subcellularLocation>
        <location evidence="1">Mitochondrion</location>
    </subcellularLocation>
    <subcellularLocation>
        <location evidence="1">Endoplasmic reticulum membrane</location>
        <topology evidence="1">Peripheral membrane protein</topology>
    </subcellularLocation>
</comment>
<comment type="domain">
    <text evidence="1 3">The VLRF1 domain mediates binding to the 60S ribosomal subunit.</text>
</comment>
<comment type="similarity">
    <text evidence="3 7">Belongs to the ANKZF1/VMS1 family.</text>
</comment>
<reference key="1">
    <citation type="journal article" date="2002" name="Nature">
        <title>The genome sequence of Schizosaccharomyces pombe.</title>
        <authorList>
            <person name="Wood V."/>
            <person name="Gwilliam R."/>
            <person name="Rajandream M.A."/>
            <person name="Lyne M.H."/>
            <person name="Lyne R."/>
            <person name="Stewart A."/>
            <person name="Sgouros J.G."/>
            <person name="Peat N."/>
            <person name="Hayles J."/>
            <person name="Baker S.G."/>
            <person name="Basham D."/>
            <person name="Bowman S."/>
            <person name="Brooks K."/>
            <person name="Brown D."/>
            <person name="Brown S."/>
            <person name="Chillingworth T."/>
            <person name="Churcher C.M."/>
            <person name="Collins M."/>
            <person name="Connor R."/>
            <person name="Cronin A."/>
            <person name="Davis P."/>
            <person name="Feltwell T."/>
            <person name="Fraser A."/>
            <person name="Gentles S."/>
            <person name="Goble A."/>
            <person name="Hamlin N."/>
            <person name="Harris D.E."/>
            <person name="Hidalgo J."/>
            <person name="Hodgson G."/>
            <person name="Holroyd S."/>
            <person name="Hornsby T."/>
            <person name="Howarth S."/>
            <person name="Huckle E.J."/>
            <person name="Hunt S."/>
            <person name="Jagels K."/>
            <person name="James K.D."/>
            <person name="Jones L."/>
            <person name="Jones M."/>
            <person name="Leather S."/>
            <person name="McDonald S."/>
            <person name="McLean J."/>
            <person name="Mooney P."/>
            <person name="Moule S."/>
            <person name="Mungall K.L."/>
            <person name="Murphy L.D."/>
            <person name="Niblett D."/>
            <person name="Odell C."/>
            <person name="Oliver K."/>
            <person name="O'Neil S."/>
            <person name="Pearson D."/>
            <person name="Quail M.A."/>
            <person name="Rabbinowitsch E."/>
            <person name="Rutherford K.M."/>
            <person name="Rutter S."/>
            <person name="Saunders D."/>
            <person name="Seeger K."/>
            <person name="Sharp S."/>
            <person name="Skelton J."/>
            <person name="Simmonds M.N."/>
            <person name="Squares R."/>
            <person name="Squares S."/>
            <person name="Stevens K."/>
            <person name="Taylor K."/>
            <person name="Taylor R.G."/>
            <person name="Tivey A."/>
            <person name="Walsh S.V."/>
            <person name="Warren T."/>
            <person name="Whitehead S."/>
            <person name="Woodward J.R."/>
            <person name="Volckaert G."/>
            <person name="Aert R."/>
            <person name="Robben J."/>
            <person name="Grymonprez B."/>
            <person name="Weltjens I."/>
            <person name="Vanstreels E."/>
            <person name="Rieger M."/>
            <person name="Schaefer M."/>
            <person name="Mueller-Auer S."/>
            <person name="Gabel C."/>
            <person name="Fuchs M."/>
            <person name="Duesterhoeft A."/>
            <person name="Fritzc C."/>
            <person name="Holzer E."/>
            <person name="Moestl D."/>
            <person name="Hilbert H."/>
            <person name="Borzym K."/>
            <person name="Langer I."/>
            <person name="Beck A."/>
            <person name="Lehrach H."/>
            <person name="Reinhardt R."/>
            <person name="Pohl T.M."/>
            <person name="Eger P."/>
            <person name="Zimmermann W."/>
            <person name="Wedler H."/>
            <person name="Wambutt R."/>
            <person name="Purnelle B."/>
            <person name="Goffeau A."/>
            <person name="Cadieu E."/>
            <person name="Dreano S."/>
            <person name="Gloux S."/>
            <person name="Lelaure V."/>
            <person name="Mottier S."/>
            <person name="Galibert F."/>
            <person name="Aves S.J."/>
            <person name="Xiang Z."/>
            <person name="Hunt C."/>
            <person name="Moore K."/>
            <person name="Hurst S.M."/>
            <person name="Lucas M."/>
            <person name="Rochet M."/>
            <person name="Gaillardin C."/>
            <person name="Tallada V.A."/>
            <person name="Garzon A."/>
            <person name="Thode G."/>
            <person name="Daga R.R."/>
            <person name="Cruzado L."/>
            <person name="Jimenez J."/>
            <person name="Sanchez M."/>
            <person name="del Rey F."/>
            <person name="Benito J."/>
            <person name="Dominguez A."/>
            <person name="Revuelta J.L."/>
            <person name="Moreno S."/>
            <person name="Armstrong J."/>
            <person name="Forsburg S.L."/>
            <person name="Cerutti L."/>
            <person name="Lowe T."/>
            <person name="McCombie W.R."/>
            <person name="Paulsen I."/>
            <person name="Potashkin J."/>
            <person name="Shpakovski G.V."/>
            <person name="Ussery D."/>
            <person name="Barrell B.G."/>
            <person name="Nurse P."/>
        </authorList>
    </citation>
    <scope>NUCLEOTIDE SEQUENCE [LARGE SCALE GENOMIC DNA]</scope>
    <source>
        <strain>972 / ATCC 24843</strain>
    </source>
</reference>
<reference key="2">
    <citation type="journal article" date="2006" name="Nat. Biotechnol.">
        <title>ORFeome cloning and global analysis of protein localization in the fission yeast Schizosaccharomyces pombe.</title>
        <authorList>
            <person name="Matsuyama A."/>
            <person name="Arai R."/>
            <person name="Yashiroda Y."/>
            <person name="Shirai A."/>
            <person name="Kamata A."/>
            <person name="Sekido S."/>
            <person name="Kobayashi Y."/>
            <person name="Hashimoto A."/>
            <person name="Hamamoto M."/>
            <person name="Hiraoka Y."/>
            <person name="Horinouchi S."/>
            <person name="Yoshida M."/>
        </authorList>
    </citation>
    <scope>SUBCELLULAR LOCATION [LARGE SCALE ANALYSIS]</scope>
</reference>
<reference key="3">
    <citation type="journal article" date="2008" name="J. Proteome Res.">
        <title>Phosphoproteome analysis of fission yeast.</title>
        <authorList>
            <person name="Wilson-Grady J.T."/>
            <person name="Villen J."/>
            <person name="Gygi S.P."/>
        </authorList>
    </citation>
    <scope>PHOSPHORYLATION [LARGE SCALE ANALYSIS] AT SER-38</scope>
    <scope>IDENTIFICATION BY MASS SPECTROMETRY</scope>
</reference>
<protein>
    <recommendedName>
        <fullName evidence="7">tRNA endonuclease vms1</fullName>
        <ecNumber evidence="1">3.1.-.-</ecNumber>
    </recommendedName>
</protein>
<gene>
    <name type="primary">vms1</name>
    <name type="ORF">SPCC1827.04</name>
</gene>
<keyword id="KW-0040">ANK repeat</keyword>
<keyword id="KW-0175">Coiled coil</keyword>
<keyword id="KW-0963">Cytoplasm</keyword>
<keyword id="KW-0255">Endonuclease</keyword>
<keyword id="KW-0256">Endoplasmic reticulum</keyword>
<keyword id="KW-0378">Hydrolase</keyword>
<keyword id="KW-0472">Membrane</keyword>
<keyword id="KW-0496">Mitochondrion</keyword>
<keyword id="KW-0540">Nuclease</keyword>
<keyword id="KW-0597">Phosphoprotein</keyword>
<keyword id="KW-1185">Reference proteome</keyword>
<keyword id="KW-0677">Repeat</keyword>